<keyword id="KW-0687">Ribonucleoprotein</keyword>
<keyword id="KW-0689">Ribosomal protein</keyword>
<keyword id="KW-0694">RNA-binding</keyword>
<keyword id="KW-0699">rRNA-binding</keyword>
<accession>Q5L8C5</accession>
<protein>
    <recommendedName>
        <fullName evidence="1">Large ribosomal subunit protein uL18</fullName>
    </recommendedName>
    <alternativeName>
        <fullName evidence="2">50S ribosomal protein L18</fullName>
    </alternativeName>
</protein>
<reference key="1">
    <citation type="journal article" date="2005" name="Science">
        <title>Extensive DNA inversions in the B. fragilis genome control variable gene expression.</title>
        <authorList>
            <person name="Cerdeno-Tarraga A.-M."/>
            <person name="Patrick S."/>
            <person name="Crossman L.C."/>
            <person name="Blakely G."/>
            <person name="Abratt V."/>
            <person name="Lennard N."/>
            <person name="Poxton I."/>
            <person name="Duerden B."/>
            <person name="Harris B."/>
            <person name="Quail M.A."/>
            <person name="Barron A."/>
            <person name="Clark L."/>
            <person name="Corton C."/>
            <person name="Doggett J."/>
            <person name="Holden M.T.G."/>
            <person name="Larke N."/>
            <person name="Line A."/>
            <person name="Lord A."/>
            <person name="Norbertczak H."/>
            <person name="Ormond D."/>
            <person name="Price C."/>
            <person name="Rabbinowitsch E."/>
            <person name="Woodward J."/>
            <person name="Barrell B.G."/>
            <person name="Parkhill J."/>
        </authorList>
    </citation>
    <scope>NUCLEOTIDE SEQUENCE [LARGE SCALE GENOMIC DNA]</scope>
    <source>
        <strain>ATCC 25285 / DSM 2151 / CCUG 4856 / JCM 11019 / LMG 10263 / NCTC 9343 / Onslow / VPI 2553 / EN-2</strain>
    </source>
</reference>
<sequence length="114" mass="12626">MTTKIERRIKIKYRVRNKVSGTAARPRMSVFRSNKQIYVQIIDDLSGKTLAAASSLGMTEKLPKKEVAAKVGEIIAKKAQEAGITTVVFDRNGYLYHGRVKEVADAARNGGLKF</sequence>
<dbReference type="EMBL" id="CR626927">
    <property type="protein sequence ID" value="CAH09663.1"/>
    <property type="molecule type" value="Genomic_DNA"/>
</dbReference>
<dbReference type="RefSeq" id="WP_005791562.1">
    <property type="nucleotide sequence ID" value="NZ_UFTH01000001.1"/>
</dbReference>
<dbReference type="SMR" id="Q5L8C5"/>
<dbReference type="PaxDb" id="272559-BF9343_3882"/>
<dbReference type="GeneID" id="60366461"/>
<dbReference type="KEGG" id="bfs:BF9343_3882"/>
<dbReference type="eggNOG" id="COG0256">
    <property type="taxonomic scope" value="Bacteria"/>
</dbReference>
<dbReference type="HOGENOM" id="CLU_098841_0_1_10"/>
<dbReference type="Proteomes" id="UP000006731">
    <property type="component" value="Chromosome"/>
</dbReference>
<dbReference type="GO" id="GO:0022625">
    <property type="term" value="C:cytosolic large ribosomal subunit"/>
    <property type="evidence" value="ECO:0007669"/>
    <property type="project" value="TreeGrafter"/>
</dbReference>
<dbReference type="GO" id="GO:0008097">
    <property type="term" value="F:5S rRNA binding"/>
    <property type="evidence" value="ECO:0007669"/>
    <property type="project" value="TreeGrafter"/>
</dbReference>
<dbReference type="GO" id="GO:0003735">
    <property type="term" value="F:structural constituent of ribosome"/>
    <property type="evidence" value="ECO:0007669"/>
    <property type="project" value="InterPro"/>
</dbReference>
<dbReference type="GO" id="GO:0006412">
    <property type="term" value="P:translation"/>
    <property type="evidence" value="ECO:0007669"/>
    <property type="project" value="UniProtKB-UniRule"/>
</dbReference>
<dbReference type="CDD" id="cd00432">
    <property type="entry name" value="Ribosomal_L18_L5e"/>
    <property type="match status" value="1"/>
</dbReference>
<dbReference type="FunFam" id="3.30.420.100:FF:000003">
    <property type="entry name" value="50S ribosomal protein L18"/>
    <property type="match status" value="1"/>
</dbReference>
<dbReference type="Gene3D" id="3.30.420.100">
    <property type="match status" value="1"/>
</dbReference>
<dbReference type="HAMAP" id="MF_01337_B">
    <property type="entry name" value="Ribosomal_uL18_B"/>
    <property type="match status" value="1"/>
</dbReference>
<dbReference type="InterPro" id="IPR004389">
    <property type="entry name" value="Ribosomal_uL18_bac-type"/>
</dbReference>
<dbReference type="InterPro" id="IPR005484">
    <property type="entry name" value="Ribosomal_uL18_bac/euk"/>
</dbReference>
<dbReference type="NCBIfam" id="TIGR00060">
    <property type="entry name" value="L18_bact"/>
    <property type="match status" value="1"/>
</dbReference>
<dbReference type="PANTHER" id="PTHR12899">
    <property type="entry name" value="39S RIBOSOMAL PROTEIN L18, MITOCHONDRIAL"/>
    <property type="match status" value="1"/>
</dbReference>
<dbReference type="PANTHER" id="PTHR12899:SF3">
    <property type="entry name" value="LARGE RIBOSOMAL SUBUNIT PROTEIN UL18M"/>
    <property type="match status" value="1"/>
</dbReference>
<dbReference type="Pfam" id="PF00861">
    <property type="entry name" value="Ribosomal_L18p"/>
    <property type="match status" value="1"/>
</dbReference>
<dbReference type="SUPFAM" id="SSF53137">
    <property type="entry name" value="Translational machinery components"/>
    <property type="match status" value="1"/>
</dbReference>
<organism>
    <name type="scientific">Bacteroides fragilis (strain ATCC 25285 / DSM 2151 / CCUG 4856 / JCM 11019 / LMG 10263 / NCTC 9343 / Onslow / VPI 2553 / EN-2)</name>
    <dbReference type="NCBI Taxonomy" id="272559"/>
    <lineage>
        <taxon>Bacteria</taxon>
        <taxon>Pseudomonadati</taxon>
        <taxon>Bacteroidota</taxon>
        <taxon>Bacteroidia</taxon>
        <taxon>Bacteroidales</taxon>
        <taxon>Bacteroidaceae</taxon>
        <taxon>Bacteroides</taxon>
    </lineage>
</organism>
<evidence type="ECO:0000255" key="1">
    <source>
        <dbReference type="HAMAP-Rule" id="MF_01337"/>
    </source>
</evidence>
<evidence type="ECO:0000305" key="2"/>
<gene>
    <name evidence="1" type="primary">rplR</name>
    <name type="ordered locus">BF3987</name>
</gene>
<proteinExistence type="inferred from homology"/>
<name>RL18_BACFN</name>
<feature type="chain" id="PRO_0000131209" description="Large ribosomal subunit protein uL18">
    <location>
        <begin position="1"/>
        <end position="114"/>
    </location>
</feature>
<comment type="function">
    <text evidence="1">This is one of the proteins that bind and probably mediate the attachment of the 5S RNA into the large ribosomal subunit, where it forms part of the central protuberance.</text>
</comment>
<comment type="subunit">
    <text evidence="1">Part of the 50S ribosomal subunit; part of the 5S rRNA/L5/L18/L25 subcomplex. Contacts the 5S and 23S rRNAs.</text>
</comment>
<comment type="similarity">
    <text evidence="1">Belongs to the universal ribosomal protein uL18 family.</text>
</comment>